<accession>O93567</accession>
<name>ZBT7A_CHICK</name>
<feature type="chain" id="PRO_0000047718" description="Zinc finger and BTB domain-containing protein 7A">
    <location>
        <begin position="1"/>
        <end position="546"/>
    </location>
</feature>
<feature type="domain" description="BTB" evidence="3">
    <location>
        <begin position="34"/>
        <end position="101"/>
    </location>
</feature>
<feature type="zinc finger region" description="C2H2-type 1" evidence="4">
    <location>
        <begin position="359"/>
        <end position="381"/>
    </location>
</feature>
<feature type="zinc finger region" description="C2H2-type 2" evidence="4">
    <location>
        <begin position="387"/>
        <end position="409"/>
    </location>
</feature>
<feature type="zinc finger region" description="C2H2-type 3" evidence="4">
    <location>
        <begin position="415"/>
        <end position="437"/>
    </location>
</feature>
<feature type="zinc finger region" description="C2H2-type 4; atypical" evidence="4">
    <location>
        <begin position="443"/>
        <end position="467"/>
    </location>
</feature>
<feature type="region of interest" description="Disordered" evidence="5">
    <location>
        <begin position="189"/>
        <end position="288"/>
    </location>
</feature>
<feature type="region of interest" description="Disordered" evidence="5">
    <location>
        <begin position="463"/>
        <end position="546"/>
    </location>
</feature>
<feature type="compositionally biased region" description="Low complexity" evidence="5">
    <location>
        <begin position="534"/>
        <end position="546"/>
    </location>
</feature>
<organism>
    <name type="scientific">Gallus gallus</name>
    <name type="common">Chicken</name>
    <dbReference type="NCBI Taxonomy" id="9031"/>
    <lineage>
        <taxon>Eukaryota</taxon>
        <taxon>Metazoa</taxon>
        <taxon>Chordata</taxon>
        <taxon>Craniata</taxon>
        <taxon>Vertebrata</taxon>
        <taxon>Euteleostomi</taxon>
        <taxon>Archelosauria</taxon>
        <taxon>Archosauria</taxon>
        <taxon>Dinosauria</taxon>
        <taxon>Saurischia</taxon>
        <taxon>Theropoda</taxon>
        <taxon>Coelurosauria</taxon>
        <taxon>Aves</taxon>
        <taxon>Neognathae</taxon>
        <taxon>Galloanserae</taxon>
        <taxon>Galliformes</taxon>
        <taxon>Phasianidae</taxon>
        <taxon>Phasianinae</taxon>
        <taxon>Gallus</taxon>
    </lineage>
</organism>
<proteinExistence type="evidence at transcript level"/>
<keyword id="KW-0238">DNA-binding</keyword>
<keyword id="KW-0479">Metal-binding</keyword>
<keyword id="KW-0539">Nucleus</keyword>
<keyword id="KW-1185">Reference proteome</keyword>
<keyword id="KW-0677">Repeat</keyword>
<keyword id="KW-0804">Transcription</keyword>
<keyword id="KW-0805">Transcription regulation</keyword>
<keyword id="KW-0862">Zinc</keyword>
<keyword id="KW-0863">Zinc-finger</keyword>
<gene>
    <name evidence="2" type="primary">ZBTB7A</name>
    <name evidence="6" type="synonym">LRF</name>
    <name type="synonym">ZBTB7</name>
</gene>
<protein>
    <recommendedName>
        <fullName evidence="7">Zinc finger and BTB domain-containing protein 7A</fullName>
    </recommendedName>
    <alternativeName>
        <fullName evidence="6">Leukemia/lymphoma-related factor</fullName>
        <shortName evidence="6">cLRF</shortName>
    </alternativeName>
</protein>
<comment type="function">
    <text evidence="1 2">Transcription factor that represses the transcription of a wide range of genes involved in cell proliferation and differentiation. Directly and specifically binds to the consensus sequence 5'-[GA][CA]GACCCCCCCCC-3' and represses transcription both by regulating the organization of chromatin and through the direct recruitment of transcription factors to gene regulatory regions (By similarity). May also play a role, independently of its transcriptional activity, in double-strand break repair via classical non-homologous end joining/cNHEJ and in alternative splicing (By similarity).</text>
</comment>
<comment type="subcellular location">
    <subcellularLocation>
        <location evidence="1">Nucleus</location>
    </subcellularLocation>
</comment>
<reference key="1">
    <citation type="journal article" date="1999" name="Oncogene">
        <title>Novel BTB/POZ domain zinc-finger protein, LRF, is a potential target of the LAZ-3/BCL-6 oncogene.</title>
        <authorList>
            <person name="Davies J.M."/>
            <person name="Hawe N."/>
            <person name="Kabarowski J."/>
            <person name="Huang Q.-H."/>
            <person name="Zhu J."/>
            <person name="Brand N.J."/>
            <person name="Leprince D."/>
            <person name="Dhordain P."/>
            <person name="Cook M."/>
            <person name="Moriss-Kay G."/>
            <person name="Zelent A."/>
        </authorList>
    </citation>
    <scope>NUCLEOTIDE SEQUENCE [MRNA]</scope>
</reference>
<dbReference type="EMBL" id="AF086831">
    <property type="protein sequence ID" value="AAC35368.1"/>
    <property type="molecule type" value="mRNA"/>
</dbReference>
<dbReference type="RefSeq" id="NP_990011.1">
    <property type="nucleotide sequence ID" value="NM_204680.2"/>
</dbReference>
<dbReference type="SMR" id="O93567"/>
<dbReference type="FunCoup" id="O93567">
    <property type="interactions" value="337"/>
</dbReference>
<dbReference type="STRING" id="9031.ENSGALP00000070348"/>
<dbReference type="PaxDb" id="9031-ENSGALP00000041866"/>
<dbReference type="Ensembl" id="ENSGALT00010068842.1">
    <property type="protein sequence ID" value="ENSGALP00010042284.1"/>
    <property type="gene ID" value="ENSGALG00010028421.1"/>
</dbReference>
<dbReference type="GeneID" id="395411"/>
<dbReference type="KEGG" id="gga:395411"/>
<dbReference type="CTD" id="51341"/>
<dbReference type="VEuPathDB" id="HostDB:geneid_395411"/>
<dbReference type="eggNOG" id="KOG1721">
    <property type="taxonomic scope" value="Eukaryota"/>
</dbReference>
<dbReference type="GeneTree" id="ENSGT00940000162053"/>
<dbReference type="HOGENOM" id="CLU_025627_1_0_1"/>
<dbReference type="InParanoid" id="O93567"/>
<dbReference type="OrthoDB" id="8922241at2759"/>
<dbReference type="PhylomeDB" id="O93567"/>
<dbReference type="PRO" id="PR:O93567"/>
<dbReference type="Proteomes" id="UP000000539">
    <property type="component" value="Chromosome 28"/>
</dbReference>
<dbReference type="Bgee" id="ENSGALG00000025907">
    <property type="expression patterns" value="Expressed in ovary and 13 other cell types or tissues"/>
</dbReference>
<dbReference type="GO" id="GO:0005634">
    <property type="term" value="C:nucleus"/>
    <property type="evidence" value="ECO:0000250"/>
    <property type="project" value="UniProtKB"/>
</dbReference>
<dbReference type="GO" id="GO:0003677">
    <property type="term" value="F:DNA binding"/>
    <property type="evidence" value="ECO:0007669"/>
    <property type="project" value="UniProtKB-KW"/>
</dbReference>
<dbReference type="GO" id="GO:0003700">
    <property type="term" value="F:DNA-binding transcription factor activity"/>
    <property type="evidence" value="ECO:0000250"/>
    <property type="project" value="UniProtKB"/>
</dbReference>
<dbReference type="GO" id="GO:0000981">
    <property type="term" value="F:DNA-binding transcription factor activity, RNA polymerase II-specific"/>
    <property type="evidence" value="ECO:0000318"/>
    <property type="project" value="GO_Central"/>
</dbReference>
<dbReference type="GO" id="GO:0001222">
    <property type="term" value="F:transcription corepressor binding"/>
    <property type="evidence" value="ECO:0000250"/>
    <property type="project" value="UniProtKB"/>
</dbReference>
<dbReference type="GO" id="GO:0008270">
    <property type="term" value="F:zinc ion binding"/>
    <property type="evidence" value="ECO:0007669"/>
    <property type="project" value="UniProtKB-KW"/>
</dbReference>
<dbReference type="GO" id="GO:0006338">
    <property type="term" value="P:chromatin remodeling"/>
    <property type="evidence" value="ECO:0000250"/>
    <property type="project" value="UniProtKB"/>
</dbReference>
<dbReference type="GO" id="GO:0045892">
    <property type="term" value="P:negative regulation of DNA-templated transcription"/>
    <property type="evidence" value="ECO:0000250"/>
    <property type="project" value="UniProtKB"/>
</dbReference>
<dbReference type="GO" id="GO:0000122">
    <property type="term" value="P:negative regulation of transcription by RNA polymerase II"/>
    <property type="evidence" value="ECO:0000250"/>
    <property type="project" value="UniProtKB"/>
</dbReference>
<dbReference type="GO" id="GO:0006357">
    <property type="term" value="P:regulation of transcription by RNA polymerase II"/>
    <property type="evidence" value="ECO:0000318"/>
    <property type="project" value="GO_Central"/>
</dbReference>
<dbReference type="GO" id="GO:2000677">
    <property type="term" value="P:regulation of transcription regulatory region DNA binding"/>
    <property type="evidence" value="ECO:0000250"/>
    <property type="project" value="UniProtKB"/>
</dbReference>
<dbReference type="CDD" id="cd18326">
    <property type="entry name" value="BTB_POZ_ZBTB7A"/>
    <property type="match status" value="1"/>
</dbReference>
<dbReference type="FunFam" id="3.30.710.10:FF:000043">
    <property type="entry name" value="Zinc finger and BTB domain containing 7A"/>
    <property type="match status" value="1"/>
</dbReference>
<dbReference type="FunFam" id="3.30.160.60:FF:001448">
    <property type="entry name" value="Zinc finger and BTB domain containing 7a"/>
    <property type="match status" value="1"/>
</dbReference>
<dbReference type="FunFam" id="3.30.160.60:FF:000115">
    <property type="entry name" value="Zinc finger and BTB domain containing 7C"/>
    <property type="match status" value="1"/>
</dbReference>
<dbReference type="FunFam" id="3.30.160.60:FF:000138">
    <property type="entry name" value="Zinc finger and BTB domain containing 7C"/>
    <property type="match status" value="1"/>
</dbReference>
<dbReference type="FunFam" id="3.30.160.60:FF:003388">
    <property type="entry name" value="Zinc finger and BTB domain-containing protein 7A"/>
    <property type="match status" value="1"/>
</dbReference>
<dbReference type="Gene3D" id="3.30.160.60">
    <property type="entry name" value="Classic Zinc Finger"/>
    <property type="match status" value="4"/>
</dbReference>
<dbReference type="Gene3D" id="3.30.710.10">
    <property type="entry name" value="Potassium Channel Kv1.1, Chain A"/>
    <property type="match status" value="1"/>
</dbReference>
<dbReference type="InterPro" id="IPR000210">
    <property type="entry name" value="BTB/POZ_dom"/>
</dbReference>
<dbReference type="InterPro" id="IPR011333">
    <property type="entry name" value="SKP1/BTB/POZ_sf"/>
</dbReference>
<dbReference type="InterPro" id="IPR036236">
    <property type="entry name" value="Znf_C2H2_sf"/>
</dbReference>
<dbReference type="InterPro" id="IPR013087">
    <property type="entry name" value="Znf_C2H2_type"/>
</dbReference>
<dbReference type="InterPro" id="IPR050457">
    <property type="entry name" value="ZnFinger_BTB_dom_contain"/>
</dbReference>
<dbReference type="PANTHER" id="PTHR46105">
    <property type="entry name" value="AGAP004733-PA"/>
    <property type="match status" value="1"/>
</dbReference>
<dbReference type="PANTHER" id="PTHR46105:SF6">
    <property type="entry name" value="ZINC FINGER AND BTB DOMAIN-CONTAINING PROTEIN 7A"/>
    <property type="match status" value="1"/>
</dbReference>
<dbReference type="Pfam" id="PF00651">
    <property type="entry name" value="BTB"/>
    <property type="match status" value="1"/>
</dbReference>
<dbReference type="Pfam" id="PF00096">
    <property type="entry name" value="zf-C2H2"/>
    <property type="match status" value="3"/>
</dbReference>
<dbReference type="SMART" id="SM00225">
    <property type="entry name" value="BTB"/>
    <property type="match status" value="1"/>
</dbReference>
<dbReference type="SMART" id="SM00355">
    <property type="entry name" value="ZnF_C2H2"/>
    <property type="match status" value="4"/>
</dbReference>
<dbReference type="SUPFAM" id="SSF57667">
    <property type="entry name" value="beta-beta-alpha zinc fingers"/>
    <property type="match status" value="2"/>
</dbReference>
<dbReference type="SUPFAM" id="SSF54695">
    <property type="entry name" value="POZ domain"/>
    <property type="match status" value="1"/>
</dbReference>
<dbReference type="PROSITE" id="PS50097">
    <property type="entry name" value="BTB"/>
    <property type="match status" value="1"/>
</dbReference>
<dbReference type="PROSITE" id="PS00028">
    <property type="entry name" value="ZINC_FINGER_C2H2_1"/>
    <property type="match status" value="3"/>
</dbReference>
<dbReference type="PROSITE" id="PS50157">
    <property type="entry name" value="ZINC_FINGER_C2H2_2"/>
    <property type="match status" value="4"/>
</dbReference>
<evidence type="ECO:0000250" key="1">
    <source>
        <dbReference type="UniProtKB" id="O88939"/>
    </source>
</evidence>
<evidence type="ECO:0000250" key="2">
    <source>
        <dbReference type="UniProtKB" id="O95365"/>
    </source>
</evidence>
<evidence type="ECO:0000255" key="3">
    <source>
        <dbReference type="PROSITE-ProRule" id="PRU00037"/>
    </source>
</evidence>
<evidence type="ECO:0000255" key="4">
    <source>
        <dbReference type="PROSITE-ProRule" id="PRU00042"/>
    </source>
</evidence>
<evidence type="ECO:0000256" key="5">
    <source>
        <dbReference type="SAM" id="MobiDB-lite"/>
    </source>
</evidence>
<evidence type="ECO:0000303" key="6">
    <source>
    </source>
</evidence>
<evidence type="ECO:0000305" key="7"/>
<sequence>MAGGVDGPIGIPFPDHSSDILSSLNEQRNNGLLCDVVILVEGQEFPTHRSVLAACSQYFKKLFTSGLVVDQQNVYEIDFVSADALSALLEFAYTATLTVSTSNVNDILNAAKLLEIPAVRDVCTDLLDRKILAKNDQMDLVDQIDQRNHLRAKEYLEFFQSNPVNGHQGSFPWTNPELRDLQRLNFRGQEDEEEPDCNGLDFYSQAPLNERPKANDCDPDSNPAMWLDREEEEAAAAPGSLFSPSQNGHYSGRGLGTPGEEEGAPGAALDQQDAGDSPSFVPTGAEAEDDARDVDGLAASVLQQVMGSVGRQQLGDDERKDDDGVVDYYLKYFGSSNESDVYPSWSQKVEKKIRAKAFQKCPICAKVIQGAGKLPRHIRTHTGEKPYECNICNVRFTRQDKLKVHMRKHTGEKPYLCQQCGAAFAHNYDLKNHMRVHTGLRPYQCDSCFKTFVRSDHLHRHLKKDGCNGIPSRRGRRPRVRDAGGLPTPTGNPEDGGFQGGGESQESEDTVQGNGREQHFEESSTAEAAGLNVAGGAAEGSAPGPS</sequence>